<gene>
    <name type="primary">AHRI</name>
</gene>
<comment type="catalytic activity">
    <reaction>
        <text>(2R)-2,3-dihydroxy-3-methylbutanoate + NADP(+) = (2S)-2-acetolactate + NADPH + H(+)</text>
        <dbReference type="Rhea" id="RHEA:22068"/>
        <dbReference type="ChEBI" id="CHEBI:15378"/>
        <dbReference type="ChEBI" id="CHEBI:49072"/>
        <dbReference type="ChEBI" id="CHEBI:57783"/>
        <dbReference type="ChEBI" id="CHEBI:58349"/>
        <dbReference type="ChEBI" id="CHEBI:58476"/>
        <dbReference type="EC" id="1.1.1.86"/>
    </reaction>
</comment>
<comment type="catalytic activity">
    <reaction>
        <text>(2R,3R)-2,3-dihydroxy-3-methylpentanoate + NADP(+) = (S)-2-ethyl-2-hydroxy-3-oxobutanoate + NADPH + H(+)</text>
        <dbReference type="Rhea" id="RHEA:13493"/>
        <dbReference type="ChEBI" id="CHEBI:15378"/>
        <dbReference type="ChEBI" id="CHEBI:49256"/>
        <dbReference type="ChEBI" id="CHEBI:49258"/>
        <dbReference type="ChEBI" id="CHEBI:57783"/>
        <dbReference type="ChEBI" id="CHEBI:58349"/>
        <dbReference type="EC" id="1.1.1.86"/>
    </reaction>
</comment>
<comment type="cofactor">
    <cofactor>
        <name>Mg(2+)</name>
        <dbReference type="ChEBI" id="CHEBI:18420"/>
    </cofactor>
    <text>Binds 2 magnesium ions per subunit.</text>
</comment>
<comment type="pathway">
    <text>Amino-acid biosynthesis; L-isoleucine biosynthesis; L-isoleucine from 2-oxobutanoate: step 2/4.</text>
</comment>
<comment type="pathway">
    <text>Amino-acid biosynthesis; L-valine biosynthesis; L-valine from pyruvate: step 2/4.</text>
</comment>
<comment type="subunit">
    <text evidence="4 6">Homodimer.</text>
</comment>
<comment type="subcellular location">
    <subcellularLocation>
        <location evidence="5">Plastid</location>
        <location evidence="5">Chloroplast</location>
    </subcellularLocation>
</comment>
<comment type="similarity">
    <text evidence="7">Belongs to the ketol-acid reductoisomerase family.</text>
</comment>
<name>ILV5_SPIOL</name>
<evidence type="ECO:0000255" key="1"/>
<evidence type="ECO:0000255" key="2">
    <source>
        <dbReference type="PROSITE-ProRule" id="PRU01197"/>
    </source>
</evidence>
<evidence type="ECO:0000255" key="3">
    <source>
        <dbReference type="PROSITE-ProRule" id="PRU01198"/>
    </source>
</evidence>
<evidence type="ECO:0000269" key="4">
    <source>
    </source>
</evidence>
<evidence type="ECO:0000269" key="5">
    <source>
    </source>
</evidence>
<evidence type="ECO:0000269" key="6">
    <source>
    </source>
</evidence>
<evidence type="ECO:0000305" key="7"/>
<evidence type="ECO:0007829" key="8">
    <source>
        <dbReference type="PDB" id="1QMG"/>
    </source>
</evidence>
<reference key="1">
    <citation type="journal article" date="1991" name="Biochem. J.">
        <title>Isolation, characterization and sequence analysis of a full-length cDNA clone encoding acetohydroxy acid reductoisomerase from spinach chloroplasts.</title>
        <authorList>
            <person name="Dumas R."/>
            <person name="Lebrun M."/>
            <person name="Douce R."/>
        </authorList>
    </citation>
    <scope>NUCLEOTIDE SEQUENCE [MRNA]</scope>
    <scope>PROTEIN SEQUENCE OF 73-88</scope>
    <scope>SUBCELLULAR LOCATION</scope>
    <source>
        <tissue>Leaf</tissue>
    </source>
</reference>
<reference key="2">
    <citation type="journal article" date="1997" name="EMBO J.">
        <title>The crystal structure of plant acetohydroxy acid isomeroreductase complexed with NADPH, two magnesium ions and a herbicidal transition state analog determined at 1.65-A resolution.</title>
        <authorList>
            <person name="Biou V."/>
            <person name="Dumas R."/>
            <person name="Cohen-Addad C."/>
            <person name="Douce R."/>
            <person name="Job D."/>
            <person name="Pebay-Peyroula E."/>
        </authorList>
    </citation>
    <scope>X-RAY CRYSTALLOGRAPHY (1.6 ANGSTROMS) OF 72-595 IN COMPLEX WITH NADPH AND MAGNESIUM IONS</scope>
    <scope>SUBUNIT</scope>
</reference>
<reference key="3">
    <citation type="journal article" date="2000" name="Acta Crystallogr. D">
        <title>Structure of spinach acetohydroxyacid isomeroreductase complexed with its reaction product dihydroxymethylvalerate, manganese and (phospho)-ADP-ribose.</title>
        <authorList>
            <person name="Thomazeau K."/>
            <person name="Dumas R."/>
            <person name="Halgand F."/>
            <person name="Forest E."/>
            <person name="Douce R."/>
            <person name="Biou V."/>
        </authorList>
    </citation>
    <scope>X-RAY CRYSTALLOGRAPHY (1.65 ANGSTROMS) OF 72-595 IN COMPLEX WITH NADPH AND MAGNESIUM IONS</scope>
    <scope>SUBUNIT</scope>
</reference>
<proteinExistence type="evidence at protein level"/>
<keyword id="KW-0002">3D-structure</keyword>
<keyword id="KW-0028">Amino-acid biosynthesis</keyword>
<keyword id="KW-0100">Branched-chain amino acid biosynthesis</keyword>
<keyword id="KW-0150">Chloroplast</keyword>
<keyword id="KW-0903">Direct protein sequencing</keyword>
<keyword id="KW-0460">Magnesium</keyword>
<keyword id="KW-0479">Metal-binding</keyword>
<keyword id="KW-0521">NADP</keyword>
<keyword id="KW-0560">Oxidoreductase</keyword>
<keyword id="KW-0934">Plastid</keyword>
<keyword id="KW-1185">Reference proteome</keyword>
<keyword id="KW-0809">Transit peptide</keyword>
<protein>
    <recommendedName>
        <fullName>Ketol-acid reductoisomerase, chloroplastic</fullName>
        <ecNumber>1.1.1.86</ecNumber>
    </recommendedName>
    <alternativeName>
        <fullName>Acetohydroxy-acid reductoisomerase</fullName>
    </alternativeName>
    <alternativeName>
        <fullName>Alpha-keto-beta-hydroxylacyl reductoisomerase</fullName>
    </alternativeName>
</protein>
<sequence length="595" mass="63754">MAATAATTFSLSSSSSTSAAASKALKQSPKPSALNLGFLGSSSTIKACRSLKAARVLPSGANGGGSALSAQMVSAPSINTPSATTFDFDSSVFKKEKVTLSGHDEYIVRGGRNLFPLLPDAFKGIKQIGVIGWGSQAPAQAQNLKDSLTEAKSDVVVKIGLRKGSNSFAEARAAGFSEENGTLGDMWETISGSDLVLLLISDSAQADNYEKVFSHMKPNSILGLSHGFLLGHLQSLGQDFPKNISVIAVCPKGMGPSVRRLYVQGKEVNGAGINSSFAVHQDVDGRATDVALGWSIALGSPFTFATTLEQEYKSDIFGERGILLGAVHGIVECLFRRYTESGMSEDLAYKNTVECITGVISKTISTKGMLALYNSLSEEGKKDFQAAYSASYYPSMDILYECYEDVASGSEIRSVVLAGRRFYEKEGLPAFPMGKIDQTRMWKVGEKVRSVRPAGDLGPLYPFTAGVYVALMMAQIEILRKKGHSYSEIINESVIEAVDSLNPFMHARGVSFMVDNCSTTARLGSRKWAPRFDYILSQQALVAVDNGAPINQDLISNFLSDPVHEAIGVCAQLRPSVDISVTADADFVRPELRQA</sequence>
<accession>Q01292</accession>
<dbReference type="EC" id="1.1.1.86"/>
<dbReference type="EMBL" id="X57073">
    <property type="protein sequence ID" value="CAA40356.1"/>
    <property type="molecule type" value="mRNA"/>
</dbReference>
<dbReference type="PIR" id="S17180">
    <property type="entry name" value="S17180"/>
</dbReference>
<dbReference type="PDB" id="1QMG">
    <property type="method" value="X-ray"/>
    <property type="resolution" value="1.60 A"/>
    <property type="chains" value="A/B/C/D=72-595"/>
</dbReference>
<dbReference type="PDB" id="1YVE">
    <property type="method" value="X-ray"/>
    <property type="resolution" value="1.65 A"/>
    <property type="chains" value="I/J/K/L=72-595"/>
</dbReference>
<dbReference type="PDBsum" id="1QMG"/>
<dbReference type="PDBsum" id="1YVE"/>
<dbReference type="SMR" id="Q01292"/>
<dbReference type="OrthoDB" id="10255643at2759"/>
<dbReference type="BRENDA" id="1.1.1.86">
    <property type="organism ID" value="5812"/>
</dbReference>
<dbReference type="UniPathway" id="UPA00047">
    <property type="reaction ID" value="UER00056"/>
</dbReference>
<dbReference type="UniPathway" id="UPA00049">
    <property type="reaction ID" value="UER00060"/>
</dbReference>
<dbReference type="EvolutionaryTrace" id="Q01292"/>
<dbReference type="Proteomes" id="UP001155700">
    <property type="component" value="Unplaced"/>
</dbReference>
<dbReference type="GO" id="GO:0009507">
    <property type="term" value="C:chloroplast"/>
    <property type="evidence" value="ECO:0007669"/>
    <property type="project" value="UniProtKB-SubCell"/>
</dbReference>
<dbReference type="GO" id="GO:0005739">
    <property type="term" value="C:mitochondrion"/>
    <property type="evidence" value="ECO:0007669"/>
    <property type="project" value="TreeGrafter"/>
</dbReference>
<dbReference type="GO" id="GO:0004455">
    <property type="term" value="F:ketol-acid reductoisomerase activity"/>
    <property type="evidence" value="ECO:0000318"/>
    <property type="project" value="GO_Central"/>
</dbReference>
<dbReference type="GO" id="GO:0000287">
    <property type="term" value="F:magnesium ion binding"/>
    <property type="evidence" value="ECO:0000314"/>
    <property type="project" value="UniProtKB"/>
</dbReference>
<dbReference type="GO" id="GO:0070402">
    <property type="term" value="F:NADPH binding"/>
    <property type="evidence" value="ECO:0000314"/>
    <property type="project" value="UniProtKB"/>
</dbReference>
<dbReference type="GO" id="GO:0042803">
    <property type="term" value="F:protein homodimerization activity"/>
    <property type="evidence" value="ECO:0000353"/>
    <property type="project" value="UniProtKB"/>
</dbReference>
<dbReference type="GO" id="GO:0009097">
    <property type="term" value="P:isoleucine biosynthetic process"/>
    <property type="evidence" value="ECO:0000318"/>
    <property type="project" value="GO_Central"/>
</dbReference>
<dbReference type="GO" id="GO:0009099">
    <property type="term" value="P:L-valine biosynthetic process"/>
    <property type="evidence" value="ECO:0000318"/>
    <property type="project" value="GO_Central"/>
</dbReference>
<dbReference type="FunFam" id="1.10.1040.10:FF:000015">
    <property type="entry name" value="Ketol-acid reductoisomerase"/>
    <property type="match status" value="1"/>
</dbReference>
<dbReference type="FunFam" id="3.40.50.720:FF:000146">
    <property type="entry name" value="Ketol-acid reductoisomerase"/>
    <property type="match status" value="1"/>
</dbReference>
<dbReference type="Gene3D" id="1.10.1040.10">
    <property type="entry name" value="N-(1-d-carboxylethyl)-l-norvaline Dehydrogenase, domain 2"/>
    <property type="match status" value="1"/>
</dbReference>
<dbReference type="Gene3D" id="3.40.50.720">
    <property type="entry name" value="NAD(P)-binding Rossmann-like Domain"/>
    <property type="match status" value="1"/>
</dbReference>
<dbReference type="InterPro" id="IPR008927">
    <property type="entry name" value="6-PGluconate_DH-like_C_sf"/>
</dbReference>
<dbReference type="InterPro" id="IPR013328">
    <property type="entry name" value="6PGD_dom2"/>
</dbReference>
<dbReference type="InterPro" id="IPR013023">
    <property type="entry name" value="KARI"/>
</dbReference>
<dbReference type="InterPro" id="IPR000506">
    <property type="entry name" value="KARI_C"/>
</dbReference>
<dbReference type="InterPro" id="IPR013116">
    <property type="entry name" value="KARI_N"/>
</dbReference>
<dbReference type="InterPro" id="IPR016206">
    <property type="entry name" value="KetolA_reductoisomerase_plant"/>
</dbReference>
<dbReference type="InterPro" id="IPR036291">
    <property type="entry name" value="NAD(P)-bd_dom_sf"/>
</dbReference>
<dbReference type="PANTHER" id="PTHR21371">
    <property type="entry name" value="KETOL-ACID REDUCTOISOMERASE, MITOCHONDRIAL"/>
    <property type="match status" value="1"/>
</dbReference>
<dbReference type="PANTHER" id="PTHR21371:SF1">
    <property type="entry name" value="KETOL-ACID REDUCTOISOMERASE, MITOCHONDRIAL"/>
    <property type="match status" value="1"/>
</dbReference>
<dbReference type="Pfam" id="PF01450">
    <property type="entry name" value="KARI_C"/>
    <property type="match status" value="2"/>
</dbReference>
<dbReference type="Pfam" id="PF07991">
    <property type="entry name" value="KARI_N"/>
    <property type="match status" value="1"/>
</dbReference>
<dbReference type="PIRSF" id="PIRSF000118">
    <property type="entry name" value="Ilv5_plant"/>
    <property type="match status" value="1"/>
</dbReference>
<dbReference type="SUPFAM" id="SSF48179">
    <property type="entry name" value="6-phosphogluconate dehydrogenase C-terminal domain-like"/>
    <property type="match status" value="1"/>
</dbReference>
<dbReference type="SUPFAM" id="SSF51735">
    <property type="entry name" value="NAD(P)-binding Rossmann-fold domains"/>
    <property type="match status" value="1"/>
</dbReference>
<dbReference type="PROSITE" id="PS51851">
    <property type="entry name" value="KARI_C"/>
    <property type="match status" value="2"/>
</dbReference>
<dbReference type="PROSITE" id="PS51850">
    <property type="entry name" value="KARI_N"/>
    <property type="match status" value="1"/>
</dbReference>
<feature type="transit peptide" description="Chloroplast" evidence="5">
    <location>
        <begin position="1"/>
        <end position="72"/>
    </location>
</feature>
<feature type="chain" id="PRO_0000015631" description="Ketol-acid reductoisomerase, chloroplastic">
    <location>
        <begin position="73"/>
        <end position="595"/>
    </location>
</feature>
<feature type="domain" description="KARI N-terminal Rossmann" evidence="2">
    <location>
        <begin position="108"/>
        <end position="306"/>
    </location>
</feature>
<feature type="domain" description="KARI C-terminal knotted 1" evidence="3">
    <location>
        <begin position="307"/>
        <end position="455"/>
    </location>
</feature>
<feature type="domain" description="KARI C-terminal knotted 2" evidence="3">
    <location>
        <begin position="456"/>
        <end position="592"/>
    </location>
</feature>
<feature type="active site" evidence="1">
    <location>
        <position position="226"/>
    </location>
</feature>
<feature type="binding site" evidence="4 6">
    <location>
        <begin position="129"/>
        <end position="136"/>
    </location>
    <ligand>
        <name>NADP(+)</name>
        <dbReference type="ChEBI" id="CHEBI:58349"/>
    </ligand>
</feature>
<feature type="binding site" evidence="4 6">
    <location>
        <begin position="162"/>
        <end position="167"/>
    </location>
    <ligand>
        <name>NADP(+)</name>
        <dbReference type="ChEBI" id="CHEBI:58349"/>
    </ligand>
</feature>
<feature type="binding site" evidence="4 6">
    <location>
        <begin position="201"/>
        <end position="205"/>
    </location>
    <ligand>
        <name>NADP(+)</name>
        <dbReference type="ChEBI" id="CHEBI:58349"/>
    </ligand>
</feature>
<feature type="binding site" evidence="3">
    <location>
        <position position="315"/>
    </location>
    <ligand>
        <name>Mg(2+)</name>
        <dbReference type="ChEBI" id="CHEBI:18420"/>
        <label>1</label>
    </ligand>
</feature>
<feature type="binding site" evidence="3">
    <location>
        <position position="315"/>
    </location>
    <ligand>
        <name>Mg(2+)</name>
        <dbReference type="ChEBI" id="CHEBI:18420"/>
        <label>2</label>
    </ligand>
</feature>
<feature type="binding site" evidence="3">
    <location>
        <position position="319"/>
    </location>
    <ligand>
        <name>Mg(2+)</name>
        <dbReference type="ChEBI" id="CHEBI:18420"/>
        <label>1</label>
    </ligand>
</feature>
<feature type="binding site" evidence="3">
    <location>
        <position position="492"/>
    </location>
    <ligand>
        <name>Mg(2+)</name>
        <dbReference type="ChEBI" id="CHEBI:18420"/>
        <label>2</label>
    </ligand>
</feature>
<feature type="binding site" evidence="3">
    <location>
        <position position="496"/>
    </location>
    <ligand>
        <name>Mg(2+)</name>
        <dbReference type="ChEBI" id="CHEBI:18420"/>
        <label>2</label>
    </ligand>
</feature>
<feature type="binding site" evidence="3">
    <location>
        <position position="518"/>
    </location>
    <ligand>
        <name>substrate</name>
    </ligand>
</feature>
<feature type="strand" evidence="8">
    <location>
        <begin position="91"/>
        <end position="93"/>
    </location>
</feature>
<feature type="strand" evidence="8">
    <location>
        <begin position="96"/>
        <end position="100"/>
    </location>
</feature>
<feature type="strand" evidence="8">
    <location>
        <begin position="103"/>
        <end position="109"/>
    </location>
</feature>
<feature type="helix" evidence="8">
    <location>
        <begin position="112"/>
        <end position="117"/>
    </location>
</feature>
<feature type="helix" evidence="8">
    <location>
        <begin position="118"/>
        <end position="121"/>
    </location>
</feature>
<feature type="turn" evidence="8">
    <location>
        <begin position="122"/>
        <end position="124"/>
    </location>
</feature>
<feature type="strand" evidence="8">
    <location>
        <begin position="126"/>
        <end position="131"/>
    </location>
</feature>
<feature type="helix" evidence="8">
    <location>
        <begin position="136"/>
        <end position="150"/>
    </location>
</feature>
<feature type="strand" evidence="8">
    <location>
        <begin position="156"/>
        <end position="161"/>
    </location>
</feature>
<feature type="helix" evidence="8">
    <location>
        <begin position="168"/>
        <end position="173"/>
    </location>
</feature>
<feature type="helix" evidence="8">
    <location>
        <begin position="178"/>
        <end position="180"/>
    </location>
</feature>
<feature type="strand" evidence="8">
    <location>
        <begin position="183"/>
        <end position="185"/>
    </location>
</feature>
<feature type="helix" evidence="8">
    <location>
        <begin position="186"/>
        <end position="191"/>
    </location>
</feature>
<feature type="strand" evidence="8">
    <location>
        <begin position="194"/>
        <end position="198"/>
    </location>
</feature>
<feature type="helix" evidence="8">
    <location>
        <begin position="202"/>
        <end position="215"/>
    </location>
</feature>
<feature type="strand" evidence="8">
    <location>
        <begin position="221"/>
        <end position="227"/>
    </location>
</feature>
<feature type="helix" evidence="8">
    <location>
        <begin position="228"/>
        <end position="235"/>
    </location>
</feature>
<feature type="strand" evidence="8">
    <location>
        <begin position="244"/>
        <end position="253"/>
    </location>
</feature>
<feature type="helix" evidence="8">
    <location>
        <begin position="255"/>
        <end position="265"/>
    </location>
</feature>
<feature type="turn" evidence="8">
    <location>
        <begin position="266"/>
        <end position="269"/>
    </location>
</feature>
<feature type="strand" evidence="8">
    <location>
        <begin position="275"/>
        <end position="281"/>
    </location>
</feature>
<feature type="strand" evidence="8">
    <location>
        <begin position="283"/>
        <end position="285"/>
    </location>
</feature>
<feature type="helix" evidence="8">
    <location>
        <begin position="287"/>
        <end position="297"/>
    </location>
</feature>
<feature type="strand" evidence="8">
    <location>
        <begin position="301"/>
        <end position="305"/>
    </location>
</feature>
<feature type="helix" evidence="8">
    <location>
        <begin position="308"/>
        <end position="320"/>
    </location>
</feature>
<feature type="turn" evidence="8">
    <location>
        <begin position="321"/>
        <end position="324"/>
    </location>
</feature>
<feature type="helix" evidence="8">
    <location>
        <begin position="325"/>
        <end position="340"/>
    </location>
</feature>
<feature type="helix" evidence="8">
    <location>
        <begin position="345"/>
        <end position="350"/>
    </location>
</feature>
<feature type="helix" evidence="8">
    <location>
        <begin position="353"/>
        <end position="357"/>
    </location>
</feature>
<feature type="helix" evidence="8">
    <location>
        <begin position="359"/>
        <end position="366"/>
    </location>
</feature>
<feature type="helix" evidence="8">
    <location>
        <begin position="369"/>
        <end position="374"/>
    </location>
</feature>
<feature type="helix" evidence="8">
    <location>
        <begin position="378"/>
        <end position="408"/>
    </location>
</feature>
<feature type="helix" evidence="8">
    <location>
        <begin position="410"/>
        <end position="420"/>
    </location>
</feature>
<feature type="helix" evidence="8">
    <location>
        <begin position="440"/>
        <end position="450"/>
    </location>
</feature>
<feature type="helix" evidence="8">
    <location>
        <begin position="462"/>
        <end position="482"/>
    </location>
</feature>
<feature type="helix" evidence="8">
    <location>
        <begin position="486"/>
        <end position="493"/>
    </location>
</feature>
<feature type="helix" evidence="8">
    <location>
        <begin position="495"/>
        <end position="499"/>
    </location>
</feature>
<feature type="helix" evidence="8">
    <location>
        <begin position="502"/>
        <end position="514"/>
    </location>
</feature>
<feature type="helix" evidence="8">
    <location>
        <begin position="519"/>
        <end position="538"/>
    </location>
</feature>
<feature type="helix" evidence="8">
    <location>
        <begin position="540"/>
        <end position="545"/>
    </location>
</feature>
<feature type="helix" evidence="8">
    <location>
        <begin position="552"/>
        <end position="560"/>
    </location>
</feature>
<feature type="helix" evidence="8">
    <location>
        <begin position="563"/>
        <end position="571"/>
    </location>
</feature>
<feature type="strand" evidence="8">
    <location>
        <begin position="586"/>
        <end position="588"/>
    </location>
</feature>
<feature type="helix" evidence="8">
    <location>
        <begin position="590"/>
        <end position="592"/>
    </location>
</feature>
<organism>
    <name type="scientific">Spinacia oleracea</name>
    <name type="common">Spinach</name>
    <dbReference type="NCBI Taxonomy" id="3562"/>
    <lineage>
        <taxon>Eukaryota</taxon>
        <taxon>Viridiplantae</taxon>
        <taxon>Streptophyta</taxon>
        <taxon>Embryophyta</taxon>
        <taxon>Tracheophyta</taxon>
        <taxon>Spermatophyta</taxon>
        <taxon>Magnoliopsida</taxon>
        <taxon>eudicotyledons</taxon>
        <taxon>Gunneridae</taxon>
        <taxon>Pentapetalae</taxon>
        <taxon>Caryophyllales</taxon>
        <taxon>Chenopodiaceae</taxon>
        <taxon>Chenopodioideae</taxon>
        <taxon>Anserineae</taxon>
        <taxon>Spinacia</taxon>
    </lineage>
</organism>